<evidence type="ECO:0000255" key="1">
    <source>
        <dbReference type="HAMAP-Rule" id="MF_04023"/>
    </source>
</evidence>
<evidence type="ECO:0000256" key="2">
    <source>
        <dbReference type="SAM" id="MobiDB-lite"/>
    </source>
</evidence>
<reference key="1">
    <citation type="journal article" date="1999" name="J. Virol.">
        <title>Human herpesvirus 6B genome sequence: coding content and comparison with human herpesvirus 6A.</title>
        <authorList>
            <person name="Dominguez G."/>
            <person name="Dambaugh T.R."/>
            <person name="Stamey F.R."/>
            <person name="Dewhurst S."/>
            <person name="Inoue N."/>
            <person name="Pellett P.E."/>
        </authorList>
    </citation>
    <scope>NUCLEOTIDE SEQUENCE [LARGE SCALE GENOMIC DNA]</scope>
</reference>
<protein>
    <recommendedName>
        <fullName evidence="1">Nuclear egress protein 1</fullName>
    </recommendedName>
</protein>
<comment type="function">
    <text evidence="1">Plays an essential role in virion nuclear egress, the first step of virion release from infected cell. Within the host nucleus, NEC1 interacts with the newly formed capsid through the vertexes and directs it to the inner nuclear membrane by associating with NEC2. Induces the budding of the capsid at the inner nuclear membrane as well as its envelopment into the perinuclear space. There, the NEC1/NEC2 complex promotes the fusion of the enveloped capsid with the outer nuclear membrane and the subsequent release of the viral capsid into the cytoplasm where it will reach the secondary budding sites in the host Golgi or trans-Golgi network.</text>
</comment>
<comment type="subunit">
    <text evidence="1">Forms a heterohexameric complex with NEC2. Interacts with capsid vertex specific component 2/CVC2; this interaction directs the capsid to the host inner nuclear membrane to initiate budding.</text>
</comment>
<comment type="subcellular location">
    <subcellularLocation>
        <location evidence="1">Host nucleus inner membrane</location>
    </subcellularLocation>
    <text evidence="1">Remains attached to the nucleus inner membrane through interaction with NEC2.</text>
</comment>
<comment type="PTM">
    <text evidence="1">Phosphorylated at serine residues in the N-terminus. This phosphorylation regulates the localization within the inner nuclear membrane.</text>
</comment>
<comment type="similarity">
    <text evidence="1">Belongs to the herpesviridae NEC1 protein family.</text>
</comment>
<dbReference type="EMBL" id="AF157706">
    <property type="protein sequence ID" value="AAD49651.1"/>
    <property type="molecule type" value="Genomic_DNA"/>
</dbReference>
<dbReference type="PIR" id="T43997">
    <property type="entry name" value="T43997"/>
</dbReference>
<dbReference type="RefSeq" id="NP_050218.1">
    <property type="nucleotide sequence ID" value="NC_000898.1"/>
</dbReference>
<dbReference type="SMR" id="P0DTO7"/>
<dbReference type="GeneID" id="1497039"/>
<dbReference type="KEGG" id="vg:1497039"/>
<dbReference type="Proteomes" id="UP000006930">
    <property type="component" value="Segment"/>
</dbReference>
<dbReference type="GO" id="GO:0044201">
    <property type="term" value="C:host cell nuclear inner membrane"/>
    <property type="evidence" value="ECO:0007669"/>
    <property type="project" value="UniProtKB-SubCell"/>
</dbReference>
<dbReference type="GO" id="GO:0016020">
    <property type="term" value="C:membrane"/>
    <property type="evidence" value="ECO:0007669"/>
    <property type="project" value="UniProtKB-KW"/>
</dbReference>
<dbReference type="GO" id="GO:0008270">
    <property type="term" value="F:zinc ion binding"/>
    <property type="evidence" value="ECO:0007669"/>
    <property type="project" value="UniProtKB-KW"/>
</dbReference>
<dbReference type="GO" id="GO:0046765">
    <property type="term" value="P:viral budding from nuclear membrane"/>
    <property type="evidence" value="ECO:0007669"/>
    <property type="project" value="InterPro"/>
</dbReference>
<dbReference type="HAMAP" id="MF_04023">
    <property type="entry name" value="HSV_NEC1"/>
    <property type="match status" value="1"/>
</dbReference>
<dbReference type="InterPro" id="IPR021152">
    <property type="entry name" value="Herpes_UL31"/>
</dbReference>
<dbReference type="Pfam" id="PF02718">
    <property type="entry name" value="Herpes_UL31"/>
    <property type="match status" value="1"/>
</dbReference>
<gene>
    <name evidence="1" type="primary">NEC1</name>
    <name type="ordered locus">U37</name>
</gene>
<name>NEC1_HHV6Z</name>
<feature type="chain" id="PRO_0000408435" description="Nuclear egress protein 1">
    <location>
        <begin position="1"/>
        <end position="264"/>
    </location>
</feature>
<feature type="zinc finger region" description="CCCH-type" evidence="1">
    <location>
        <begin position="83"/>
        <end position="187"/>
    </location>
</feature>
<feature type="region of interest" description="Disordered" evidence="2">
    <location>
        <begin position="1"/>
        <end position="22"/>
    </location>
</feature>
<feature type="compositionally biased region" description="Basic residues" evidence="2">
    <location>
        <begin position="1"/>
        <end position="12"/>
    </location>
</feature>
<keyword id="KW-1043">Host membrane</keyword>
<keyword id="KW-1048">Host nucleus</keyword>
<keyword id="KW-0472">Membrane</keyword>
<keyword id="KW-0479">Metal-binding</keyword>
<keyword id="KW-0597">Phosphoprotein</keyword>
<keyword id="KW-1185">Reference proteome</keyword>
<keyword id="KW-0862">Zinc</keyword>
<keyword id="KW-0863">Zinc-finger</keyword>
<accession>P0DTO7</accession>
<accession>Q77PU8</accession>
<accession>Q9WT27</accession>
<organism>
    <name type="scientific">Human herpesvirus 6B (strain Z29)</name>
    <name type="common">HHV-6 variant B</name>
    <name type="synonym">Human B lymphotropic virus</name>
    <dbReference type="NCBI Taxonomy" id="36351"/>
    <lineage>
        <taxon>Viruses</taxon>
        <taxon>Duplodnaviria</taxon>
        <taxon>Heunggongvirae</taxon>
        <taxon>Peploviricota</taxon>
        <taxon>Herviviricetes</taxon>
        <taxon>Herpesvirales</taxon>
        <taxon>Orthoherpesviridae</taxon>
        <taxon>Betaherpesvirinae</taxon>
        <taxon>Roseolovirus</taxon>
        <taxon>Roseolovirus humanbeta6b</taxon>
        <taxon>Human herpesvirus 6B</taxon>
    </lineage>
</organism>
<sequence length="264" mass="30869">MTVHKNRFRRSRSLSVTHRIQKRPDHREKTKLYLQLKLHDLHAVFNLFPEYEQKFLAIIKLPITGKEPIDVPFSLSNHHQHTCLEFSPYANEQISKSACLHCESVSVPTSSDAMVAHLNQVTNVMQNRFYFYGFRKDMELIRMSAKQPTIFQIFYIVHNTINNIFPIMFEKKQKLGMHIVFQSRTLHIPCECIKQIIAVSSGYNVYLDILQDSVILTVLCETLDTNTNIHIDIGMLQKKLEEMDIPNEISDRLEKYKGHLIGFH</sequence>
<organismHost>
    <name type="scientific">Homo sapiens</name>
    <name type="common">Human</name>
    <dbReference type="NCBI Taxonomy" id="9606"/>
</organismHost>
<proteinExistence type="inferred from homology"/>